<protein>
    <recommendedName>
        <fullName evidence="1">ATP synthase subunit b</fullName>
    </recommendedName>
    <alternativeName>
        <fullName evidence="1">ATP synthase F(0) sector subunit b</fullName>
    </alternativeName>
    <alternativeName>
        <fullName evidence="1">ATPase subunit I</fullName>
    </alternativeName>
    <alternativeName>
        <fullName evidence="1">F-type ATPase subunit b</fullName>
        <shortName evidence="1">F-ATPase subunit b</shortName>
    </alternativeName>
</protein>
<organism>
    <name type="scientific">Azoarcus sp. (strain BH72)</name>
    <dbReference type="NCBI Taxonomy" id="418699"/>
    <lineage>
        <taxon>Bacteria</taxon>
        <taxon>Pseudomonadati</taxon>
        <taxon>Pseudomonadota</taxon>
        <taxon>Betaproteobacteria</taxon>
        <taxon>Rhodocyclales</taxon>
        <taxon>Zoogloeaceae</taxon>
        <taxon>Azoarcus</taxon>
    </lineage>
</organism>
<feature type="chain" id="PRO_0000368317" description="ATP synthase subunit b">
    <location>
        <begin position="1"/>
        <end position="157"/>
    </location>
</feature>
<feature type="transmembrane region" description="Helical" evidence="1">
    <location>
        <begin position="7"/>
        <end position="27"/>
    </location>
</feature>
<evidence type="ECO:0000255" key="1">
    <source>
        <dbReference type="HAMAP-Rule" id="MF_01398"/>
    </source>
</evidence>
<reference key="1">
    <citation type="journal article" date="2006" name="Nat. Biotechnol.">
        <title>Complete genome of the mutualistic, N2-fixing grass endophyte Azoarcus sp. strain BH72.</title>
        <authorList>
            <person name="Krause A."/>
            <person name="Ramakumar A."/>
            <person name="Bartels D."/>
            <person name="Battistoni F."/>
            <person name="Bekel T."/>
            <person name="Boch J."/>
            <person name="Boehm M."/>
            <person name="Friedrich F."/>
            <person name="Hurek T."/>
            <person name="Krause L."/>
            <person name="Linke B."/>
            <person name="McHardy A.C."/>
            <person name="Sarkar A."/>
            <person name="Schneiker S."/>
            <person name="Syed A.A."/>
            <person name="Thauer R."/>
            <person name="Vorhoelter F.-J."/>
            <person name="Weidner S."/>
            <person name="Puehler A."/>
            <person name="Reinhold-Hurek B."/>
            <person name="Kaiser O."/>
            <person name="Goesmann A."/>
        </authorList>
    </citation>
    <scope>NUCLEOTIDE SEQUENCE [LARGE SCALE GENOMIC DNA]</scope>
    <source>
        <strain>BH72</strain>
    </source>
</reference>
<name>ATPF_AZOSB</name>
<accession>A1K1R8</accession>
<keyword id="KW-0066">ATP synthesis</keyword>
<keyword id="KW-0997">Cell inner membrane</keyword>
<keyword id="KW-1003">Cell membrane</keyword>
<keyword id="KW-0138">CF(0)</keyword>
<keyword id="KW-0375">Hydrogen ion transport</keyword>
<keyword id="KW-0406">Ion transport</keyword>
<keyword id="KW-0472">Membrane</keyword>
<keyword id="KW-1185">Reference proteome</keyword>
<keyword id="KW-0812">Transmembrane</keyword>
<keyword id="KW-1133">Transmembrane helix</keyword>
<keyword id="KW-0813">Transport</keyword>
<comment type="function">
    <text evidence="1">F(1)F(0) ATP synthase produces ATP from ADP in the presence of a proton or sodium gradient. F-type ATPases consist of two structural domains, F(1) containing the extramembraneous catalytic core and F(0) containing the membrane proton channel, linked together by a central stalk and a peripheral stalk. During catalysis, ATP synthesis in the catalytic domain of F(1) is coupled via a rotary mechanism of the central stalk subunits to proton translocation.</text>
</comment>
<comment type="function">
    <text evidence="1">Component of the F(0) channel, it forms part of the peripheral stalk, linking F(1) to F(0).</text>
</comment>
<comment type="subunit">
    <text evidence="1">F-type ATPases have 2 components, F(1) - the catalytic core - and F(0) - the membrane proton channel. F(1) has five subunits: alpha(3), beta(3), gamma(1), delta(1), epsilon(1). F(0) has three main subunits: a(1), b(2) and c(10-14). The alpha and beta chains form an alternating ring which encloses part of the gamma chain. F(1) is attached to F(0) by a central stalk formed by the gamma and epsilon chains, while a peripheral stalk is formed by the delta and b chains.</text>
</comment>
<comment type="subcellular location">
    <subcellularLocation>
        <location evidence="1">Cell inner membrane</location>
        <topology evidence="1">Single-pass membrane protein</topology>
    </subcellularLocation>
</comment>
<comment type="similarity">
    <text evidence="1">Belongs to the ATPase B chain family.</text>
</comment>
<gene>
    <name evidence="1" type="primary">atpF</name>
    <name type="ordered locus">azo0155</name>
</gene>
<dbReference type="EMBL" id="AM406670">
    <property type="protein sequence ID" value="CAL92773.1"/>
    <property type="molecule type" value="Genomic_DNA"/>
</dbReference>
<dbReference type="RefSeq" id="WP_011763891.1">
    <property type="nucleotide sequence ID" value="NC_008702.1"/>
</dbReference>
<dbReference type="SMR" id="A1K1R8"/>
<dbReference type="STRING" id="62928.azo0155"/>
<dbReference type="KEGG" id="aoa:dqs_0164"/>
<dbReference type="KEGG" id="azo:azo0155"/>
<dbReference type="eggNOG" id="COG0711">
    <property type="taxonomic scope" value="Bacteria"/>
</dbReference>
<dbReference type="HOGENOM" id="CLU_079215_4_5_4"/>
<dbReference type="OrthoDB" id="9788020at2"/>
<dbReference type="Proteomes" id="UP000002588">
    <property type="component" value="Chromosome"/>
</dbReference>
<dbReference type="GO" id="GO:0005886">
    <property type="term" value="C:plasma membrane"/>
    <property type="evidence" value="ECO:0007669"/>
    <property type="project" value="UniProtKB-SubCell"/>
</dbReference>
<dbReference type="GO" id="GO:0045259">
    <property type="term" value="C:proton-transporting ATP synthase complex"/>
    <property type="evidence" value="ECO:0007669"/>
    <property type="project" value="UniProtKB-KW"/>
</dbReference>
<dbReference type="GO" id="GO:0046933">
    <property type="term" value="F:proton-transporting ATP synthase activity, rotational mechanism"/>
    <property type="evidence" value="ECO:0007669"/>
    <property type="project" value="UniProtKB-UniRule"/>
</dbReference>
<dbReference type="GO" id="GO:0046961">
    <property type="term" value="F:proton-transporting ATPase activity, rotational mechanism"/>
    <property type="evidence" value="ECO:0007669"/>
    <property type="project" value="TreeGrafter"/>
</dbReference>
<dbReference type="CDD" id="cd06503">
    <property type="entry name" value="ATP-synt_Fo_b"/>
    <property type="match status" value="1"/>
</dbReference>
<dbReference type="Gene3D" id="6.10.250.1580">
    <property type="match status" value="1"/>
</dbReference>
<dbReference type="HAMAP" id="MF_01398">
    <property type="entry name" value="ATP_synth_b_bprime"/>
    <property type="match status" value="1"/>
</dbReference>
<dbReference type="InterPro" id="IPR028987">
    <property type="entry name" value="ATP_synth_B-like_membr_sf"/>
</dbReference>
<dbReference type="InterPro" id="IPR002146">
    <property type="entry name" value="ATP_synth_b/b'su_bac/chlpt"/>
</dbReference>
<dbReference type="InterPro" id="IPR005864">
    <property type="entry name" value="ATP_synth_F0_bsu_bac"/>
</dbReference>
<dbReference type="InterPro" id="IPR050059">
    <property type="entry name" value="ATP_synthase_B_chain"/>
</dbReference>
<dbReference type="NCBIfam" id="TIGR01144">
    <property type="entry name" value="ATP_synt_b"/>
    <property type="match status" value="1"/>
</dbReference>
<dbReference type="NCBIfam" id="NF004411">
    <property type="entry name" value="PRK05759.1-2"/>
    <property type="match status" value="1"/>
</dbReference>
<dbReference type="PANTHER" id="PTHR33445:SF1">
    <property type="entry name" value="ATP SYNTHASE SUBUNIT B"/>
    <property type="match status" value="1"/>
</dbReference>
<dbReference type="PANTHER" id="PTHR33445">
    <property type="entry name" value="ATP SYNTHASE SUBUNIT B', CHLOROPLASTIC"/>
    <property type="match status" value="1"/>
</dbReference>
<dbReference type="Pfam" id="PF00430">
    <property type="entry name" value="ATP-synt_B"/>
    <property type="match status" value="1"/>
</dbReference>
<dbReference type="SUPFAM" id="SSF81573">
    <property type="entry name" value="F1F0 ATP synthase subunit B, membrane domain"/>
    <property type="match status" value="1"/>
</dbReference>
<proteinExistence type="inferred from homology"/>
<sequence length="157" mass="17046">MNLNATLIAQLVVFFILAWFTMKFVWPPIVKALDERAKKIADGLAAADKAKADLALAEKKVVEELRKARESAGDVRASAEKQASQLVDEARAEASRIIAQAREAAEAEAGAAAQRAKEALRDQVAHLAVAGAEKILRREINAQVHAELLANLKQELQ</sequence>